<keyword id="KW-0324">Glycolysis</keyword>
<keyword id="KW-0413">Isomerase</keyword>
<keyword id="KW-0464">Manganese</keyword>
<keyword id="KW-0479">Metal-binding</keyword>
<keyword id="KW-1185">Reference proteome</keyword>
<proteinExistence type="inferred from homology"/>
<feature type="chain" id="PRO_1000063999" description="2,3-bisphosphoglycerate-independent phosphoglycerate mutase">
    <location>
        <begin position="1"/>
        <end position="516"/>
    </location>
</feature>
<feature type="active site" description="Phosphoserine intermediate" evidence="1">
    <location>
        <position position="64"/>
    </location>
</feature>
<feature type="binding site" evidence="1">
    <location>
        <position position="14"/>
    </location>
    <ligand>
        <name>Mn(2+)</name>
        <dbReference type="ChEBI" id="CHEBI:29035"/>
        <label>2</label>
    </ligand>
</feature>
<feature type="binding site" evidence="1">
    <location>
        <position position="64"/>
    </location>
    <ligand>
        <name>Mn(2+)</name>
        <dbReference type="ChEBI" id="CHEBI:29035"/>
        <label>2</label>
    </ligand>
</feature>
<feature type="binding site" evidence="1">
    <location>
        <position position="125"/>
    </location>
    <ligand>
        <name>substrate</name>
    </ligand>
</feature>
<feature type="binding site" evidence="1">
    <location>
        <begin position="155"/>
        <end position="156"/>
    </location>
    <ligand>
        <name>substrate</name>
    </ligand>
</feature>
<feature type="binding site" evidence="1">
    <location>
        <position position="187"/>
    </location>
    <ligand>
        <name>substrate</name>
    </ligand>
</feature>
<feature type="binding site" evidence="1">
    <location>
        <position position="193"/>
    </location>
    <ligand>
        <name>substrate</name>
    </ligand>
</feature>
<feature type="binding site" evidence="1">
    <location>
        <begin position="263"/>
        <end position="266"/>
    </location>
    <ligand>
        <name>substrate</name>
    </ligand>
</feature>
<feature type="binding site" evidence="1">
    <location>
        <position position="337"/>
    </location>
    <ligand>
        <name>substrate</name>
    </ligand>
</feature>
<feature type="binding site" evidence="1">
    <location>
        <position position="404"/>
    </location>
    <ligand>
        <name>Mn(2+)</name>
        <dbReference type="ChEBI" id="CHEBI:29035"/>
        <label>1</label>
    </ligand>
</feature>
<feature type="binding site" evidence="1">
    <location>
        <position position="408"/>
    </location>
    <ligand>
        <name>Mn(2+)</name>
        <dbReference type="ChEBI" id="CHEBI:29035"/>
        <label>1</label>
    </ligand>
</feature>
<feature type="binding site" evidence="1">
    <location>
        <position position="445"/>
    </location>
    <ligand>
        <name>Mn(2+)</name>
        <dbReference type="ChEBI" id="CHEBI:29035"/>
        <label>2</label>
    </ligand>
</feature>
<feature type="binding site" evidence="1">
    <location>
        <position position="446"/>
    </location>
    <ligand>
        <name>Mn(2+)</name>
        <dbReference type="ChEBI" id="CHEBI:29035"/>
        <label>2</label>
    </ligand>
</feature>
<feature type="binding site" evidence="1">
    <location>
        <position position="464"/>
    </location>
    <ligand>
        <name>Mn(2+)</name>
        <dbReference type="ChEBI" id="CHEBI:29035"/>
        <label>1</label>
    </ligand>
</feature>
<gene>
    <name evidence="1" type="primary">gpmI</name>
    <name type="ordered locus">Sde_0494</name>
</gene>
<reference key="1">
    <citation type="journal article" date="2008" name="PLoS Genet.">
        <title>Complete genome sequence of the complex carbohydrate-degrading marine bacterium, Saccharophagus degradans strain 2-40 T.</title>
        <authorList>
            <person name="Weiner R.M."/>
            <person name="Taylor L.E. II"/>
            <person name="Henrissat B."/>
            <person name="Hauser L."/>
            <person name="Land M."/>
            <person name="Coutinho P.M."/>
            <person name="Rancurel C."/>
            <person name="Saunders E.H."/>
            <person name="Longmire A.G."/>
            <person name="Zhang H."/>
            <person name="Bayer E.A."/>
            <person name="Gilbert H.J."/>
            <person name="Larimer F."/>
            <person name="Zhulin I.B."/>
            <person name="Ekborg N.A."/>
            <person name="Lamed R."/>
            <person name="Richardson P.M."/>
            <person name="Borovok I."/>
            <person name="Hutcheson S."/>
        </authorList>
    </citation>
    <scope>NUCLEOTIDE SEQUENCE [LARGE SCALE GENOMIC DNA]</scope>
    <source>
        <strain>2-40 / ATCC 43961 / DSM 17024</strain>
    </source>
</reference>
<evidence type="ECO:0000255" key="1">
    <source>
        <dbReference type="HAMAP-Rule" id="MF_01038"/>
    </source>
</evidence>
<sequence length="516" mass="56139">MSEVKKPLALIILDGFGYSESDKYNAINAAKAPTWRKIWAENPKTTIATSGMAVGLPEGQMGNSEVGHMTLGAGRVVYQNFTRINKAIADGDFYTNPVYTKAVDDAQSQGKAVHVIGLLSDGGVHSHEDHMIAMMELAVKRGAEKVYMHAFLDGRDTPPRSAKAPLQKTEEKLKALGGGKIASIIGRFFALDRDNRWDRVQQAFDLMVDGKAAFTAQSATAGLEAAYERDENDEFVKATAIVDADGKPVTIEDGDAVIFMNFRPDRARQLTNAFVDKNFDGFARARVPALSDFVMTTEYSADIDTSCAYPPEDLVNSFGEVMAKNGKKQLRIAETEKYAHVTFFFSGGQESLYEGEDRILVPSPQVETYDEQPEMSAPEVTAKLVDAIENGGYDAIICNYANCDQVGHTGDFDASVKAVEAVDAALAEVFAALERVGGEALITADHGNVELMYDDEAQQLHTQHTTLPVPLVYVGKRDISLEQGGSLADIAPTMLALLDVPQPTEMNGRNLVKFSK</sequence>
<protein>
    <recommendedName>
        <fullName evidence="1">2,3-bisphosphoglycerate-independent phosphoglycerate mutase</fullName>
        <shortName evidence="1">BPG-independent PGAM</shortName>
        <shortName evidence="1">Phosphoglyceromutase</shortName>
        <shortName evidence="1">iPGM</shortName>
        <ecNumber evidence="1">5.4.2.12</ecNumber>
    </recommendedName>
</protein>
<accession>Q21NH1</accession>
<comment type="function">
    <text evidence="1">Catalyzes the interconversion of 2-phosphoglycerate and 3-phosphoglycerate.</text>
</comment>
<comment type="catalytic activity">
    <reaction evidence="1">
        <text>(2R)-2-phosphoglycerate = (2R)-3-phosphoglycerate</text>
        <dbReference type="Rhea" id="RHEA:15901"/>
        <dbReference type="ChEBI" id="CHEBI:58272"/>
        <dbReference type="ChEBI" id="CHEBI:58289"/>
        <dbReference type="EC" id="5.4.2.12"/>
    </reaction>
</comment>
<comment type="cofactor">
    <cofactor evidence="1">
        <name>Mn(2+)</name>
        <dbReference type="ChEBI" id="CHEBI:29035"/>
    </cofactor>
    <text evidence="1">Binds 2 manganese ions per subunit.</text>
</comment>
<comment type="pathway">
    <text evidence="1">Carbohydrate degradation; glycolysis; pyruvate from D-glyceraldehyde 3-phosphate: step 3/5.</text>
</comment>
<comment type="subunit">
    <text evidence="1">Monomer.</text>
</comment>
<comment type="similarity">
    <text evidence="1">Belongs to the BPG-independent phosphoglycerate mutase family.</text>
</comment>
<organism>
    <name type="scientific">Saccharophagus degradans (strain 2-40 / ATCC 43961 / DSM 17024)</name>
    <dbReference type="NCBI Taxonomy" id="203122"/>
    <lineage>
        <taxon>Bacteria</taxon>
        <taxon>Pseudomonadati</taxon>
        <taxon>Pseudomonadota</taxon>
        <taxon>Gammaproteobacteria</taxon>
        <taxon>Cellvibrionales</taxon>
        <taxon>Cellvibrionaceae</taxon>
        <taxon>Saccharophagus</taxon>
    </lineage>
</organism>
<dbReference type="EC" id="5.4.2.12" evidence="1"/>
<dbReference type="EMBL" id="CP000282">
    <property type="protein sequence ID" value="ABD79758.1"/>
    <property type="molecule type" value="Genomic_DNA"/>
</dbReference>
<dbReference type="RefSeq" id="WP_011466979.1">
    <property type="nucleotide sequence ID" value="NC_007912.1"/>
</dbReference>
<dbReference type="SMR" id="Q21NH1"/>
<dbReference type="STRING" id="203122.Sde_0494"/>
<dbReference type="GeneID" id="98612194"/>
<dbReference type="KEGG" id="sde:Sde_0494"/>
<dbReference type="eggNOG" id="COG0696">
    <property type="taxonomic scope" value="Bacteria"/>
</dbReference>
<dbReference type="HOGENOM" id="CLU_026099_2_0_6"/>
<dbReference type="OrthoDB" id="9800863at2"/>
<dbReference type="UniPathway" id="UPA00109">
    <property type="reaction ID" value="UER00186"/>
</dbReference>
<dbReference type="Proteomes" id="UP000001947">
    <property type="component" value="Chromosome"/>
</dbReference>
<dbReference type="GO" id="GO:0005829">
    <property type="term" value="C:cytosol"/>
    <property type="evidence" value="ECO:0007669"/>
    <property type="project" value="TreeGrafter"/>
</dbReference>
<dbReference type="GO" id="GO:0030145">
    <property type="term" value="F:manganese ion binding"/>
    <property type="evidence" value="ECO:0007669"/>
    <property type="project" value="UniProtKB-UniRule"/>
</dbReference>
<dbReference type="GO" id="GO:0004619">
    <property type="term" value="F:phosphoglycerate mutase activity"/>
    <property type="evidence" value="ECO:0007669"/>
    <property type="project" value="UniProtKB-EC"/>
</dbReference>
<dbReference type="GO" id="GO:0006007">
    <property type="term" value="P:glucose catabolic process"/>
    <property type="evidence" value="ECO:0007669"/>
    <property type="project" value="InterPro"/>
</dbReference>
<dbReference type="GO" id="GO:0006096">
    <property type="term" value="P:glycolytic process"/>
    <property type="evidence" value="ECO:0007669"/>
    <property type="project" value="UniProtKB-UniRule"/>
</dbReference>
<dbReference type="CDD" id="cd16010">
    <property type="entry name" value="iPGM"/>
    <property type="match status" value="1"/>
</dbReference>
<dbReference type="FunFam" id="3.40.1450.10:FF:000001">
    <property type="entry name" value="2,3-bisphosphoglycerate-independent phosphoglycerate mutase"/>
    <property type="match status" value="1"/>
</dbReference>
<dbReference type="Gene3D" id="3.40.720.10">
    <property type="entry name" value="Alkaline Phosphatase, subunit A"/>
    <property type="match status" value="1"/>
</dbReference>
<dbReference type="Gene3D" id="3.40.1450.10">
    <property type="entry name" value="BPG-independent phosphoglycerate mutase, domain B"/>
    <property type="match status" value="1"/>
</dbReference>
<dbReference type="HAMAP" id="MF_01038">
    <property type="entry name" value="GpmI"/>
    <property type="match status" value="1"/>
</dbReference>
<dbReference type="InterPro" id="IPR017850">
    <property type="entry name" value="Alkaline_phosphatase_core_sf"/>
</dbReference>
<dbReference type="InterPro" id="IPR011258">
    <property type="entry name" value="BPG-indep_PGM_N"/>
</dbReference>
<dbReference type="InterPro" id="IPR006124">
    <property type="entry name" value="Metalloenzyme"/>
</dbReference>
<dbReference type="InterPro" id="IPR036646">
    <property type="entry name" value="PGAM_B_sf"/>
</dbReference>
<dbReference type="InterPro" id="IPR005995">
    <property type="entry name" value="Pgm_bpd_ind"/>
</dbReference>
<dbReference type="NCBIfam" id="TIGR01307">
    <property type="entry name" value="pgm_bpd_ind"/>
    <property type="match status" value="1"/>
</dbReference>
<dbReference type="PANTHER" id="PTHR31637">
    <property type="entry name" value="2,3-BISPHOSPHOGLYCERATE-INDEPENDENT PHOSPHOGLYCERATE MUTASE"/>
    <property type="match status" value="1"/>
</dbReference>
<dbReference type="PANTHER" id="PTHR31637:SF0">
    <property type="entry name" value="2,3-BISPHOSPHOGLYCERATE-INDEPENDENT PHOSPHOGLYCERATE MUTASE"/>
    <property type="match status" value="1"/>
</dbReference>
<dbReference type="Pfam" id="PF06415">
    <property type="entry name" value="iPGM_N"/>
    <property type="match status" value="1"/>
</dbReference>
<dbReference type="Pfam" id="PF01676">
    <property type="entry name" value="Metalloenzyme"/>
    <property type="match status" value="1"/>
</dbReference>
<dbReference type="PIRSF" id="PIRSF001492">
    <property type="entry name" value="IPGAM"/>
    <property type="match status" value="1"/>
</dbReference>
<dbReference type="SUPFAM" id="SSF64158">
    <property type="entry name" value="2,3-Bisphosphoglycerate-independent phosphoglycerate mutase, substrate-binding domain"/>
    <property type="match status" value="1"/>
</dbReference>
<dbReference type="SUPFAM" id="SSF53649">
    <property type="entry name" value="Alkaline phosphatase-like"/>
    <property type="match status" value="1"/>
</dbReference>
<name>GPMI_SACD2</name>